<accession>Q6TPK4</accession>
<keyword id="KW-0020">Allergen</keyword>
<keyword id="KW-0903">Direct protein sequencing</keyword>
<keyword id="KW-0325">Glycoprotein</keyword>
<keyword id="KW-0611">Plant defense</keyword>
<keyword id="KW-0646">Protease inhibitor</keyword>
<keyword id="KW-0964">Secreted</keyword>
<keyword id="KW-0732">Signal</keyword>
<keyword id="KW-0789">Thiol protease inhibitor</keyword>
<organism>
    <name type="scientific">Actinidia deliciosa</name>
    <name type="common">Kiwi</name>
    <dbReference type="NCBI Taxonomy" id="3627"/>
    <lineage>
        <taxon>Eukaryota</taxon>
        <taxon>Viridiplantae</taxon>
        <taxon>Streptophyta</taxon>
        <taxon>Embryophyta</taxon>
        <taxon>Tracheophyta</taxon>
        <taxon>Spermatophyta</taxon>
        <taxon>Magnoliopsida</taxon>
        <taxon>eudicotyledons</taxon>
        <taxon>Gunneridae</taxon>
        <taxon>Pentapetalae</taxon>
        <taxon>asterids</taxon>
        <taxon>Ericales</taxon>
        <taxon>Actinidiaceae</taxon>
        <taxon>Actinidia</taxon>
    </lineage>
</organism>
<sequence>MVPKPLSLLLFLLLALSAAVVGGRKLVAAGGWRPIESLNSAEVQDVAQFAVSEHNKQANDELQYQSVVRGYTQVVAGTNYRLVIAAKDGAVVGNYEAVVWDKPWMHFRNLTSFRKV</sequence>
<reference evidence="7 8" key="1">
    <citation type="journal article" date="2004" name="Phytochemistry">
        <title>Purification and characterization of phytocystatins from kiwifruit cortex and seeds.</title>
        <authorList>
            <person name="Rassam M."/>
            <person name="Laing W.A."/>
        </authorList>
    </citation>
    <scope>NUCLEOTIDE SEQUENCE [MRNA]</scope>
    <scope>PROTEIN SEQUENCE OF 27-46</scope>
    <scope>FUNCTION</scope>
    <scope>MASS SPECTROMETRY</scope>
    <source>
        <strain evidence="3">cv. Hayward</strain>
        <tissue evidence="8">Fruit cortical tissue</tissue>
    </source>
</reference>
<reference key="2">
    <citation type="journal article" date="2010" name="Mol. Nutr. Food Res.">
        <title>Cysteine proteinase inhibitor Act d 4 is a functional allergen contributing to the clinical symptoms of kiwifruit allergy.</title>
        <authorList>
            <person name="Popovic M.M."/>
            <person name="Milovanovic M."/>
            <person name="Burazer L."/>
            <person name="Vuckovic O."/>
            <person name="Hoffmann-Sommergruber K."/>
            <person name="Knulst A.C."/>
            <person name="Lindner B."/>
            <person name="Petersen A."/>
            <person name="Jankov R."/>
            <person name="Gavrovic-Jankulovic M."/>
        </authorList>
    </citation>
    <scope>PROTEIN SEQUENCE OF 27-41</scope>
    <scope>FUNCTION</scope>
    <scope>MASS SPECTROMETRY</scope>
    <scope>GLYCOSYLATION</scope>
    <scope>ALLERGEN</scope>
</reference>
<reference evidence="7" key="3">
    <citation type="journal article" date="2004" name="J. Allergy Clin. Immunol.">
        <title>IgE sensitization profiles toward green and gold kiwifruits differ among patients allergic to kiwifruit from 3 European countries.</title>
        <authorList>
            <person name="Bublin M."/>
            <person name="Mari A."/>
            <person name="Ebner C."/>
            <person name="Knulst A."/>
            <person name="Scheiner O."/>
            <person name="Hoffmann-Sommergruber K."/>
            <person name="Breiteneder H."/>
            <person name="Radauer C."/>
        </authorList>
    </citation>
    <scope>PROTEIN SEQUENCE OF 27-37</scope>
    <scope>ALLERGEN</scope>
    <source>
        <strain evidence="4">cv. Hayward</strain>
        <tissue evidence="4">Fruit</tissue>
    </source>
</reference>
<evidence type="ECO:0000250" key="1">
    <source>
        <dbReference type="UniProtKB" id="P01035"/>
    </source>
</evidence>
<evidence type="ECO:0000255" key="2"/>
<evidence type="ECO:0000269" key="3">
    <source>
    </source>
</evidence>
<evidence type="ECO:0000269" key="4">
    <source>
    </source>
</evidence>
<evidence type="ECO:0000269" key="5">
    <source>
    </source>
</evidence>
<evidence type="ECO:0000303" key="6">
    <source>
    </source>
</evidence>
<evidence type="ECO:0000305" key="7"/>
<evidence type="ECO:0000312" key="8">
    <source>
        <dbReference type="EMBL" id="AAR92223.1"/>
    </source>
</evidence>
<feature type="signal peptide" evidence="3 4 5">
    <location>
        <begin position="1"/>
        <end position="26"/>
    </location>
</feature>
<feature type="chain" id="PRO_0000393866" description="Cysteine proteinase inhibitor 1" evidence="3 4">
    <location>
        <begin position="27"/>
        <end position="116"/>
    </location>
</feature>
<feature type="domain" description="Cystatin" evidence="2">
    <location>
        <begin position="30"/>
        <end position="89"/>
    </location>
</feature>
<feature type="short sequence motif" description="Secondary area of contact" evidence="1">
    <location>
        <begin position="73"/>
        <end position="77"/>
    </location>
</feature>
<feature type="site" description="Reactive site" evidence="1">
    <location>
        <position position="30"/>
    </location>
</feature>
<feature type="glycosylation site" description="N-linked (GlcNAc...) asparagine" evidence="2">
    <location>
        <position position="109"/>
    </location>
</feature>
<feature type="sequence conflict" description="In Ref. 3; AA sequence." evidence="7" ref="3">
    <original>S</original>
    <variation>E</variation>
    <location>
        <position position="37"/>
    </location>
</feature>
<name>CYT1_ACTDE</name>
<dbReference type="EMBL" id="AY390352">
    <property type="protein sequence ID" value="AAR92223.1"/>
    <property type="molecule type" value="mRNA"/>
</dbReference>
<dbReference type="SMR" id="Q6TPK4"/>
<dbReference type="Allergome" id="2404">
    <property type="allergen name" value="Act d 4"/>
</dbReference>
<dbReference type="Allergome" id="3587">
    <property type="allergen name" value="Act d 4.0101"/>
</dbReference>
<dbReference type="MEROPS" id="I25.033"/>
<dbReference type="GO" id="GO:0005576">
    <property type="term" value="C:extracellular region"/>
    <property type="evidence" value="ECO:0007669"/>
    <property type="project" value="UniProtKB-SubCell"/>
</dbReference>
<dbReference type="GO" id="GO:0004869">
    <property type="term" value="F:cysteine-type endopeptidase inhibitor activity"/>
    <property type="evidence" value="ECO:0000314"/>
    <property type="project" value="UniProtKB"/>
</dbReference>
<dbReference type="GO" id="GO:0006952">
    <property type="term" value="P:defense response"/>
    <property type="evidence" value="ECO:0007669"/>
    <property type="project" value="UniProtKB-KW"/>
</dbReference>
<dbReference type="CDD" id="cd00042">
    <property type="entry name" value="CY"/>
    <property type="match status" value="1"/>
</dbReference>
<dbReference type="FunFam" id="3.10.450.10:FF:000035">
    <property type="entry name" value="Cysteine proteinase inhibitor 1"/>
    <property type="match status" value="1"/>
</dbReference>
<dbReference type="Gene3D" id="3.10.450.10">
    <property type="match status" value="1"/>
</dbReference>
<dbReference type="InterPro" id="IPR000010">
    <property type="entry name" value="Cystatin_dom"/>
</dbReference>
<dbReference type="InterPro" id="IPR046350">
    <property type="entry name" value="Cystatin_sf"/>
</dbReference>
<dbReference type="PANTHER" id="PTHR47364">
    <property type="entry name" value="CYSTEINE PROTEINASE INHIBITOR 5"/>
    <property type="match status" value="1"/>
</dbReference>
<dbReference type="PANTHER" id="PTHR47364:SF2">
    <property type="entry name" value="CYSTEINE PROTEINASE INHIBITOR 5"/>
    <property type="match status" value="1"/>
</dbReference>
<dbReference type="Pfam" id="PF16845">
    <property type="entry name" value="SQAPI"/>
    <property type="match status" value="1"/>
</dbReference>
<dbReference type="SMART" id="SM00043">
    <property type="entry name" value="CY"/>
    <property type="match status" value="1"/>
</dbReference>
<dbReference type="SUPFAM" id="SSF54403">
    <property type="entry name" value="Cystatin/monellin"/>
    <property type="match status" value="1"/>
</dbReference>
<protein>
    <recommendedName>
        <fullName evidence="6">Cysteine proteinase inhibitor 1</fullName>
        <shortName evidence="6">KCPI1</shortName>
    </recommendedName>
    <alternativeName>
        <fullName evidence="8">Phytocystatin</fullName>
    </alternativeName>
    <allergenName>Act d 4</allergenName>
</protein>
<comment type="function">
    <text evidence="3 5">Specific inhibitor of papain family cysteine proteinases. Inhibits papain, chymopapain, bromelain, ficin, human cathepsins B, H and L, actinidain and house dustmite endopeptidase 1, but does not inhibit human bleomycin hydrolase. Inhibits papain with an IC(50) of 2.47 nM. Does not inhibit cysteine proteinases belonging to other families including clostripain, streptopain and calpain.</text>
</comment>
<comment type="subcellular location">
    <subcellularLocation>
        <location evidence="1">Secreted</location>
    </subcellularLocation>
</comment>
<comment type="PTM">
    <text evidence="5">Glycosylated.</text>
</comment>
<comment type="mass spectrometry"/>
<comment type="mass spectrometry"/>
<comment type="mass spectrometry"/>
<comment type="allergen">
    <text evidence="4 5">Causes an allergic reaction in human. Binds IgE. Induces basophil activation.</text>
</comment>
<comment type="similarity">
    <text evidence="2">Belongs to the cystatin family. Phytocystatin subfamily.</text>
</comment>
<proteinExistence type="evidence at protein level"/>